<accession>Q9S814</accession>
<organism>
    <name type="scientific">Arabidopsis thaliana</name>
    <name type="common">Mouse-ear cress</name>
    <dbReference type="NCBI Taxonomy" id="3702"/>
    <lineage>
        <taxon>Eukaryota</taxon>
        <taxon>Viridiplantae</taxon>
        <taxon>Streptophyta</taxon>
        <taxon>Embryophyta</taxon>
        <taxon>Tracheophyta</taxon>
        <taxon>Spermatophyta</taxon>
        <taxon>Magnoliopsida</taxon>
        <taxon>eudicotyledons</taxon>
        <taxon>Gunneridae</taxon>
        <taxon>Pentapetalae</taxon>
        <taxon>rosids</taxon>
        <taxon>malvids</taxon>
        <taxon>Brassicales</taxon>
        <taxon>Brassicaceae</taxon>
        <taxon>Camelineae</taxon>
        <taxon>Arabidopsis</taxon>
    </lineage>
</organism>
<feature type="chain" id="PRO_0000212604" description="Ethylene-insensitive protein 2">
    <location>
        <begin position="1"/>
        <end position="1294"/>
    </location>
</feature>
<feature type="chain" id="PRO_0000435290" description="EIN2-CEND" evidence="14">
    <location>
        <begin position="646"/>
        <end position="1294"/>
    </location>
</feature>
<feature type="topological domain" description="Cytoplasmic" evidence="1">
    <location>
        <begin position="1"/>
        <end position="12"/>
    </location>
</feature>
<feature type="transmembrane region" description="Helical" evidence="1">
    <location>
        <begin position="13"/>
        <end position="33"/>
    </location>
</feature>
<feature type="topological domain" description="Extracellular" evidence="1">
    <location>
        <begin position="34"/>
        <end position="50"/>
    </location>
</feature>
<feature type="transmembrane region" description="Helical" evidence="1">
    <location>
        <begin position="51"/>
        <end position="71"/>
    </location>
</feature>
<feature type="topological domain" description="Cytoplasmic" evidence="1">
    <location>
        <begin position="72"/>
        <end position="105"/>
    </location>
</feature>
<feature type="transmembrane region" description="Helical" evidence="1">
    <location>
        <begin position="106"/>
        <end position="126"/>
    </location>
</feature>
<feature type="topological domain" description="Extracellular" evidence="1">
    <location>
        <position position="127"/>
    </location>
</feature>
<feature type="transmembrane region" description="Helical" evidence="1">
    <location>
        <begin position="128"/>
        <end position="148"/>
    </location>
</feature>
<feature type="topological domain" description="Cytoplasmic" evidence="1">
    <location>
        <begin position="149"/>
        <end position="155"/>
    </location>
</feature>
<feature type="transmembrane region" description="Helical" evidence="1">
    <location>
        <begin position="156"/>
        <end position="176"/>
    </location>
</feature>
<feature type="topological domain" description="Extracellular" evidence="1">
    <location>
        <begin position="177"/>
        <end position="194"/>
    </location>
</feature>
<feature type="transmembrane region" description="Helical" evidence="1">
    <location>
        <begin position="195"/>
        <end position="215"/>
    </location>
</feature>
<feature type="topological domain" description="Cytoplasmic" evidence="1">
    <location>
        <begin position="216"/>
        <end position="237"/>
    </location>
</feature>
<feature type="transmembrane region" description="Helical" evidence="1">
    <location>
        <begin position="238"/>
        <end position="258"/>
    </location>
</feature>
<feature type="topological domain" description="Extracellular" evidence="1">
    <location>
        <begin position="259"/>
        <end position="287"/>
    </location>
</feature>
<feature type="transmembrane region" description="Helical" evidence="1">
    <location>
        <begin position="288"/>
        <end position="308"/>
    </location>
</feature>
<feature type="topological domain" description="Cytoplasmic" evidence="1">
    <location>
        <begin position="309"/>
        <end position="334"/>
    </location>
</feature>
<feature type="transmembrane region" description="Helical" evidence="1">
    <location>
        <begin position="335"/>
        <end position="355"/>
    </location>
</feature>
<feature type="transmembrane region" description="Helical" evidence="1">
    <location>
        <begin position="356"/>
        <end position="376"/>
    </location>
</feature>
<feature type="topological domain" description="Cytoplasmic" evidence="1">
    <location>
        <begin position="377"/>
        <end position="397"/>
    </location>
</feature>
<feature type="transmembrane region" description="Helical" evidence="1">
    <location>
        <begin position="398"/>
        <end position="418"/>
    </location>
</feature>
<feature type="topological domain" description="Extracellular" evidence="1">
    <location>
        <begin position="419"/>
        <end position="440"/>
    </location>
</feature>
<feature type="transmembrane region" description="Helical" evidence="1">
    <location>
        <begin position="441"/>
        <end position="461"/>
    </location>
</feature>
<feature type="topological domain" description="Cytoplasmic" evidence="1">
    <location>
        <begin position="462"/>
        <end position="1294"/>
    </location>
</feature>
<feature type="region of interest" description="Disordered" evidence="2">
    <location>
        <begin position="534"/>
        <end position="561"/>
    </location>
</feature>
<feature type="region of interest" description="Disordered" evidence="2">
    <location>
        <begin position="623"/>
        <end position="662"/>
    </location>
</feature>
<feature type="region of interest" description="Disordered" evidence="2">
    <location>
        <begin position="1269"/>
        <end position="1294"/>
    </location>
</feature>
<feature type="short sequence motif" description="Nuclear localization signal" evidence="1">
    <location>
        <begin position="1262"/>
        <end position="1269"/>
    </location>
</feature>
<feature type="compositionally biased region" description="Basic and acidic residues" evidence="2">
    <location>
        <begin position="536"/>
        <end position="550"/>
    </location>
</feature>
<feature type="modified residue" description="Phosphoserine" evidence="16">
    <location>
        <position position="645"/>
    </location>
</feature>
<feature type="modified residue" description="Phosphoserine" evidence="16">
    <location>
        <position position="659"/>
    </location>
</feature>
<feature type="modified residue" description="Phosphoserine" evidence="16">
    <location>
        <position position="757"/>
    </location>
</feature>
<feature type="modified residue" description="Phosphothreonine" evidence="16">
    <location>
        <position position="819"/>
    </location>
</feature>
<feature type="modified residue" description="Phosphoserine" evidence="16">
    <location>
        <position position="924"/>
    </location>
</feature>
<feature type="modified residue" description="Phosphoserine" evidence="16">
    <location>
        <position position="1283"/>
    </location>
</feature>
<feature type="mutagenesis site" description="Constitutive of ethylene response in absence of ethylene associated with an increased histone acetylation of H3K14 and H3K23. 85% decreased phosphorylation and constitutive activation of ethylene response; when associated with A-924." evidence="14 16 23">
    <original>S</original>
    <variation>A</variation>
    <location>
        <position position="645"/>
    </location>
</feature>
<feature type="mutagenesis site" description="Loss of function." evidence="14">
    <original>S</original>
    <variation>E</variation>
    <location>
        <position position="645"/>
    </location>
</feature>
<feature type="mutagenesis site" description="85% decreased phosphorylation and constitutive activation of ethylene response; when associated with A-645." evidence="16">
    <original>S</original>
    <variation>A</variation>
    <location>
        <position position="924"/>
    </location>
</feature>
<feature type="mutagenesis site" description="In ein2-9; lower sensitivity to ethylene." evidence="3">
    <original>H</original>
    <variation>P</variation>
    <location>
        <position position="1143"/>
    </location>
</feature>
<feature type="mutagenesis site" description="No effect on nuclear translocation but loss of translational repression function." evidence="19">
    <original>LKRYKRRL</original>
    <variation>KPKKKRKV</variation>
    <location>
        <begin position="1262"/>
        <end position="1269"/>
    </location>
</feature>
<feature type="mutagenesis site" description="Loss of nuclear localization, EIN2-CEND functions and interaction with ETR1." evidence="18 19">
    <location>
        <begin position="1262"/>
        <end position="1269"/>
    </location>
</feature>
<sequence length="1294" mass="140956">MEAEIVNVRPQLGFIQRMVPALLPVLLVSVGYIDPGKWVANIEGGARFGYDLVAITLLFNFAAILCQYVAARISVVTGKHLAQICNEEYDKWTCMFLGIQAEFSAILLDLTMVVGVAHALNLLFGVELSTGVFLAAMDAFLFPVFASFLENGMANTVSIYSAGLVLLLYVSGVLLSQSEIPLSMNGVLTRLNGESAFALMGLLGASIVPHNFYIHSYFAGESTSSSDVDKSSLCQDHLFAIFGVFSGLSLVNYVLMNAAANVFHSTGLVVLTFHDALSLMEQVFMSPLIPVVFLMLLFFSSQITALAWAFGGEVVLHDFLKIEIPAWLHRATIRILAVAPALYCVWTSGADGIYQLLIFTQVLVAMMLPCSVIPLFRIASSRQIMGVHKIPQVGEFLALTTFLGFLGLNVVFVVEMVFGSSDWAGGLRWNTVMGTSIQYTTLLVSSCASLCLILWLAATPLKSASNRAEAQIWNMDAQNALSYPSVQEEEIERTETRRNEDESIVRLESRVKDQLDTTSVTSSVYDLPENILMTDQEIRSSPPEERELDVKYSTSQVSSLKEDSDVKEQSVLQSTVVNEVSDKDLIVETKMAKIEPMSPVEKIVSMENNSKFIEKDVEGVSWETEEATKAAPTSNFTVGSDGPPSFRSLSGEGGSGTGSLSRLQGLGRAARRHLSAILDEFWGHLYDFHGQLVAEARAKKLDQLFGTDQKSASSMKADSFGKDISSGYCMSPTAKGMDSQMTSSLYDSLKQQRTPGSIDSLYGLQRGSSPSPLVNRMQMLGAYGNTTNNNNAYELSERRYSSLRAPSSSEGWEHQQPATVHGYQMKSYVDNLAKERLEALQSRGEIPTSRSMALGTLSYTQQLALALKQKSQNGLTPGPAPGFENFAGSRSISRQSERSYYGVPSSGNTDTVGAAVANEKKYSSMPDISGLSMSARNMHLPNNKSGYWDPSSGGGGYGASYGRLSNESSLYSNLGSRVGVPSTYDDISQSRGGYRDAYSLPQSATTGTGSLWSRQPFEQFGVAERNGAVGEELRNRSNPINIDNNASSNVDAEAKLLQSFRHCILKLIKLEGSEWLFGQSDGVDEELIDRVAAREKFIYEAEAREINQVGHMGEPLISSVPNCGDGCVWRADLIVSFGVWCIHRVLDLSLMESRPELWGKYTYVLNRLQGVIDPAFSKLRTPMTPCFCLQIPASHQRASPTSANGMLPPAAKPAKGKCTTAVTLLDLIKDVEMAISCRKGRTGTAAGDVAFPKGKENLASVLKRYKRRLSNKPVGMNQDGPGSRKNVTAYGSLG</sequence>
<evidence type="ECO:0000255" key="1"/>
<evidence type="ECO:0000256" key="2">
    <source>
        <dbReference type="SAM" id="MobiDB-lite"/>
    </source>
</evidence>
<evidence type="ECO:0000269" key="3">
    <source>
    </source>
</evidence>
<evidence type="ECO:0000269" key="4">
    <source>
    </source>
</evidence>
<evidence type="ECO:0000269" key="5">
    <source>
    </source>
</evidence>
<evidence type="ECO:0000269" key="6">
    <source>
    </source>
</evidence>
<evidence type="ECO:0000269" key="7">
    <source>
    </source>
</evidence>
<evidence type="ECO:0000269" key="8">
    <source>
    </source>
</evidence>
<evidence type="ECO:0000269" key="9">
    <source>
    </source>
</evidence>
<evidence type="ECO:0000269" key="10">
    <source>
    </source>
</evidence>
<evidence type="ECO:0000269" key="11">
    <source>
    </source>
</evidence>
<evidence type="ECO:0000269" key="12">
    <source>
    </source>
</evidence>
<evidence type="ECO:0000269" key="13">
    <source>
    </source>
</evidence>
<evidence type="ECO:0000269" key="14">
    <source>
    </source>
</evidence>
<evidence type="ECO:0000269" key="15">
    <source>
    </source>
</evidence>
<evidence type="ECO:0000269" key="16">
    <source>
    </source>
</evidence>
<evidence type="ECO:0000269" key="17">
    <source>
    </source>
</evidence>
<evidence type="ECO:0000269" key="18">
    <source>
    </source>
</evidence>
<evidence type="ECO:0000269" key="19">
    <source>
    </source>
</evidence>
<evidence type="ECO:0000269" key="20">
    <source>
    </source>
</evidence>
<evidence type="ECO:0000269" key="21">
    <source>
    </source>
</evidence>
<evidence type="ECO:0000269" key="22">
    <source>
    </source>
</evidence>
<evidence type="ECO:0000269" key="23">
    <source>
    </source>
</evidence>
<evidence type="ECO:0000269" key="24">
    <source>
    </source>
</evidence>
<evidence type="ECO:0000269" key="25">
    <source>
    </source>
</evidence>
<evidence type="ECO:0000269" key="26">
    <source>
    </source>
</evidence>
<evidence type="ECO:0000269" key="27">
    <source ref="17"/>
</evidence>
<evidence type="ECO:0000303" key="28">
    <source>
    </source>
</evidence>
<evidence type="ECO:0000303" key="29">
    <source>
    </source>
</evidence>
<evidence type="ECO:0000303" key="30">
    <source>
    </source>
</evidence>
<evidence type="ECO:0000303" key="31">
    <source>
    </source>
</evidence>
<evidence type="ECO:0000305" key="32"/>
<evidence type="ECO:0000305" key="33">
    <source>
    </source>
</evidence>
<evidence type="ECO:0000312" key="34">
    <source>
        <dbReference type="Araport" id="AT5G03280"/>
    </source>
</evidence>
<evidence type="ECO:0000312" key="35">
    <source>
        <dbReference type="EMBL" id="BAB08388.1"/>
    </source>
</evidence>
<evidence type="ECO:0000312" key="36">
    <source>
        <dbReference type="EMBL" id="CAB83284.1"/>
    </source>
</evidence>
<reference key="1">
    <citation type="journal article" date="1999" name="Science">
        <title>EIN2, a bifunctional transducer of ethylene and stress responses in Arabidopsis.</title>
        <authorList>
            <person name="Alonso J.M."/>
            <person name="Hirayama T."/>
            <person name="Roman G."/>
            <person name="Nourizadeh S."/>
            <person name="Ecker J.R."/>
        </authorList>
    </citation>
    <scope>NUCLEOTIDE SEQUENCE [GENOMIC DNA / MRNA]</scope>
    <scope>FUNCTION</scope>
    <scope>DOMAIN</scope>
    <scope>MUTAGENESIS OF HIS-1143</scope>
    <scope>DISRUPTION PHENOTYPE</scope>
</reference>
<reference key="2">
    <citation type="journal article" date="1997" name="DNA Res.">
        <title>Structural analysis of Arabidopsis thaliana chromosome 5. I. Sequence features of the 1.6 Mb regions covered by twenty physically assigned P1 clones.</title>
        <authorList>
            <person name="Sato S."/>
            <person name="Kotani H."/>
            <person name="Nakamura Y."/>
            <person name="Kaneko T."/>
            <person name="Asamizu E."/>
            <person name="Fukami M."/>
            <person name="Miyajima N."/>
            <person name="Tabata S."/>
        </authorList>
    </citation>
    <scope>NUCLEOTIDE SEQUENCE [LARGE SCALE GENOMIC DNA]</scope>
    <source>
        <strain>cv. Columbia</strain>
    </source>
</reference>
<reference key="3">
    <citation type="journal article" date="2000" name="Nature">
        <title>Sequence and analysis of chromosome 5 of the plant Arabidopsis thaliana.</title>
        <authorList>
            <person name="Tabata S."/>
            <person name="Kaneko T."/>
            <person name="Nakamura Y."/>
            <person name="Kotani H."/>
            <person name="Kato T."/>
            <person name="Asamizu E."/>
            <person name="Miyajima N."/>
            <person name="Sasamoto S."/>
            <person name="Kimura T."/>
            <person name="Hosouchi T."/>
            <person name="Kawashima K."/>
            <person name="Kohara M."/>
            <person name="Matsumoto M."/>
            <person name="Matsuno A."/>
            <person name="Muraki A."/>
            <person name="Nakayama S."/>
            <person name="Nakazaki N."/>
            <person name="Naruo K."/>
            <person name="Okumura S."/>
            <person name="Shinpo S."/>
            <person name="Takeuchi C."/>
            <person name="Wada T."/>
            <person name="Watanabe A."/>
            <person name="Yamada M."/>
            <person name="Yasuda M."/>
            <person name="Sato S."/>
            <person name="de la Bastide M."/>
            <person name="Huang E."/>
            <person name="Spiegel L."/>
            <person name="Gnoj L."/>
            <person name="O'Shaughnessy A."/>
            <person name="Preston R."/>
            <person name="Habermann K."/>
            <person name="Murray J."/>
            <person name="Johnson D."/>
            <person name="Rohlfing T."/>
            <person name="Nelson J."/>
            <person name="Stoneking T."/>
            <person name="Pepin K."/>
            <person name="Spieth J."/>
            <person name="Sekhon M."/>
            <person name="Armstrong J."/>
            <person name="Becker M."/>
            <person name="Belter E."/>
            <person name="Cordum H."/>
            <person name="Cordes M."/>
            <person name="Courtney L."/>
            <person name="Courtney W."/>
            <person name="Dante M."/>
            <person name="Du H."/>
            <person name="Edwards J."/>
            <person name="Fryman J."/>
            <person name="Haakensen B."/>
            <person name="Lamar E."/>
            <person name="Latreille P."/>
            <person name="Leonard S."/>
            <person name="Meyer R."/>
            <person name="Mulvaney E."/>
            <person name="Ozersky P."/>
            <person name="Riley A."/>
            <person name="Strowmatt C."/>
            <person name="Wagner-McPherson C."/>
            <person name="Wollam A."/>
            <person name="Yoakum M."/>
            <person name="Bell M."/>
            <person name="Dedhia N."/>
            <person name="Parnell L."/>
            <person name="Shah R."/>
            <person name="Rodriguez M."/>
            <person name="Hoon See L."/>
            <person name="Vil D."/>
            <person name="Baker J."/>
            <person name="Kirchoff K."/>
            <person name="Toth K."/>
            <person name="King L."/>
            <person name="Bahret A."/>
            <person name="Miller B."/>
            <person name="Marra M.A."/>
            <person name="Martienssen R."/>
            <person name="McCombie W.R."/>
            <person name="Wilson R.K."/>
            <person name="Murphy G."/>
            <person name="Bancroft I."/>
            <person name="Volckaert G."/>
            <person name="Wambutt R."/>
            <person name="Duesterhoeft A."/>
            <person name="Stiekema W."/>
            <person name="Pohl T."/>
            <person name="Entian K.-D."/>
            <person name="Terryn N."/>
            <person name="Hartley N."/>
            <person name="Bent E."/>
            <person name="Johnson S."/>
            <person name="Langham S.-A."/>
            <person name="McCullagh B."/>
            <person name="Robben J."/>
            <person name="Grymonprez B."/>
            <person name="Zimmermann W."/>
            <person name="Ramsperger U."/>
            <person name="Wedler H."/>
            <person name="Balke K."/>
            <person name="Wedler E."/>
            <person name="Peters S."/>
            <person name="van Staveren M."/>
            <person name="Dirkse W."/>
            <person name="Mooijman P."/>
            <person name="Klein Lankhorst R."/>
            <person name="Weitzenegger T."/>
            <person name="Bothe G."/>
            <person name="Rose M."/>
            <person name="Hauf J."/>
            <person name="Berneiser S."/>
            <person name="Hempel S."/>
            <person name="Feldpausch M."/>
            <person name="Lamberth S."/>
            <person name="Villarroel R."/>
            <person name="Gielen J."/>
            <person name="Ardiles W."/>
            <person name="Bents O."/>
            <person name="Lemcke K."/>
            <person name="Kolesov G."/>
            <person name="Mayer K.F.X."/>
            <person name="Rudd S."/>
            <person name="Schoof H."/>
            <person name="Schueller C."/>
            <person name="Zaccaria P."/>
            <person name="Mewes H.-W."/>
            <person name="Bevan M."/>
            <person name="Fransz P.F."/>
        </authorList>
    </citation>
    <scope>NUCLEOTIDE SEQUENCE [LARGE SCALE GENOMIC DNA]</scope>
    <source>
        <strain>cv. Columbia</strain>
    </source>
</reference>
<reference key="4">
    <citation type="journal article" date="2017" name="Plant J.">
        <title>Araport11: a complete reannotation of the Arabidopsis thaliana reference genome.</title>
        <authorList>
            <person name="Cheng C.Y."/>
            <person name="Krishnakumar V."/>
            <person name="Chan A.P."/>
            <person name="Thibaud-Nissen F."/>
            <person name="Schobel S."/>
            <person name="Town C.D."/>
        </authorList>
    </citation>
    <scope>GENOME REANNOTATION</scope>
    <source>
        <strain>cv. Columbia</strain>
    </source>
</reference>
<reference key="5">
    <citation type="journal article" date="1995" name="Plant Physiol.">
        <title>Cytokinin action is coupled to ethylene in its effects on the inhibition of root and hypocotyl elongation in Arabidopsis thaliana seedlings.</title>
        <authorList>
            <person name="Cary A.J."/>
            <person name="Liu W."/>
            <person name="Howell S.H."/>
        </authorList>
    </citation>
    <scope>FUNCTION</scope>
</reference>
<reference key="6">
    <citation type="journal article" date="1997" name="Plant J.">
        <title>Identification of three genetic loci controlling leaf senescence in Arabidopsis thaliana.</title>
        <authorList>
            <person name="Oh S.A."/>
            <person name="Park J.-H."/>
            <person name="Lee G.I."/>
            <person name="Paek K.H."/>
            <person name="Park S.K."/>
            <person name="Nam H.G."/>
        </authorList>
    </citation>
    <scope>FUNCTION</scope>
</reference>
<reference key="7">
    <citation type="journal article" date="2003" name="Plant Cell">
        <title>Analysis of combinatorial loss-of-function mutants in the Arabidopsis ethylene receptors reveals that the ers1 etr1 double mutant has severe developmental defects that are EIN2 dependent.</title>
        <authorList>
            <person name="Hall A.E."/>
            <person name="Bleecker A.B."/>
        </authorList>
    </citation>
    <scope>FUNCTION</scope>
</reference>
<reference key="8">
    <citation type="journal article" date="2003" name="Plant Mol. Biol.">
        <title>Transcriptome analysis of O3-exposed Arabidopsis reveals that multiple signal pathways act mutually antagonistically to induce gene expression.</title>
        <authorList>
            <person name="Tamaoki M."/>
            <person name="Nakajima N."/>
            <person name="Kubo A."/>
            <person name="Aono M."/>
            <person name="Matsuyama T."/>
            <person name="Saji H."/>
        </authorList>
    </citation>
    <scope>FUNCTION</scope>
</reference>
<reference key="9">
    <citation type="journal article" date="2004" name="Plant Cell">
        <title>Growth regulators and the control of nucleotide sugar flux.</title>
        <authorList>
            <person name="Seifert G.J."/>
            <person name="Barber C."/>
            <person name="Wells B."/>
            <person name="Roberts K."/>
        </authorList>
    </citation>
    <scope>FUNCTION</scope>
</reference>
<reference key="10">
    <citation type="journal article" date="2004" name="Plant J.">
        <title>Transcriptional profiling by cDNA-AFLP and microarray analysis reveals novel insights into the early response to ethylene in Arabidopsis.</title>
        <authorList>
            <person name="De Paepe A."/>
            <person name="Vuylsteke M."/>
            <person name="Van Hummelen P."/>
            <person name="Zabeau M."/>
            <person name="Van Der Straeten D."/>
        </authorList>
    </citation>
    <scope>FUNCTION</scope>
</reference>
<reference key="11">
    <citation type="journal article" date="2008" name="Plant J.">
        <title>The eer5 mutation, which affects a novel proteasome-related subunit, indicates a prominent role for the COP9 signalosome in resetting the ethylene-signaling pathway in Arabidopsis.</title>
        <authorList>
            <person name="Christians M.J."/>
            <person name="Robles L.M."/>
            <person name="Zeller S.M."/>
            <person name="Larsen P.B."/>
        </authorList>
    </citation>
    <scope>INTERACTION WITH EER5; CSN3; CSN6A AND CSN6B</scope>
</reference>
<reference key="12">
    <citation type="journal article" date="2009" name="Biochem. J.">
        <title>EIN2, the central regulator of ethylene signalling, is localized at the ER membrane where it interacts with the ethylene receptor ETR1.</title>
        <authorList>
            <person name="Bisson M.M."/>
            <person name="Bleckmann A."/>
            <person name="Allekotte S."/>
            <person name="Groth G."/>
        </authorList>
    </citation>
    <scope>SUBCELLULAR LOCATION</scope>
    <scope>INTERACTION WITH ETR1</scope>
</reference>
<reference key="13">
    <citation type="journal article" date="2009" name="Genes Dev.">
        <title>Interplay between ethylene, ETP1/ETP2 F-box proteins, and degradation of EIN2 triggers ethylene responses in Arabidopsis.</title>
        <authorList>
            <person name="Qiao H."/>
            <person name="Chang K.N."/>
            <person name="Yazaki J."/>
            <person name="Ecker J.R."/>
        </authorList>
    </citation>
    <scope>FUNCTION</scope>
    <scope>INTERACTION WITH ETP1 AND ETP2</scope>
    <scope>DOMAIN</scope>
</reference>
<reference key="14">
    <citation type="journal article" date="2009" name="Plant Physiol.">
        <title>Large-scale Arabidopsis phosphoproteome profiling reveals novel chloroplast kinase substrates and phosphorylation networks.</title>
        <authorList>
            <person name="Reiland S."/>
            <person name="Messerli G."/>
            <person name="Baerenfaller K."/>
            <person name="Gerrits B."/>
            <person name="Endler A."/>
            <person name="Grossmann J."/>
            <person name="Gruissem W."/>
            <person name="Baginsky S."/>
        </authorList>
    </citation>
    <scope>IDENTIFICATION BY MASS SPECTROMETRY [LARGE SCALE ANALYSIS]</scope>
</reference>
<reference key="15">
    <citation type="journal article" date="2010" name="Mol. Plant">
        <title>New insight in ethylene signaling: autokinase activity of ETR1 modulates the interaction of receptors and EIN2.</title>
        <authorList>
            <person name="Bisson M.M."/>
            <person name="Groth G."/>
        </authorList>
    </citation>
    <scope>INTERACTION WITH ETR1; ERS1; ETR2; ERS2 AND EIN4</scope>
</reference>
<reference key="16">
    <citation type="journal article" date="2010" name="Plant Cell">
        <title>Ethylene-induced stabilization of ETHYLENE INSENSITIVE3 and EIN3-LIKE1 is mediated by proteasomal degradation of EIN3 binding F-box 1 and 2 that requires EIN2 in Arabidopsis.</title>
        <authorList>
            <person name="An F."/>
            <person name="Zhao Q."/>
            <person name="Ji Y."/>
            <person name="Li W."/>
            <person name="Jiang Z."/>
            <person name="Yu X."/>
            <person name="Zhang C."/>
            <person name="Han Y."/>
            <person name="He W."/>
            <person name="Liu Y."/>
            <person name="Zhang S."/>
            <person name="Ecker J.R."/>
            <person name="Guo H."/>
        </authorList>
    </citation>
    <scope>FUNCTION</scope>
</reference>
<reference key="17">
    <citation type="journal article" date="2011" name="Genes Genomics">
        <title>Three positive regulators of leaf senescence in Arabidopsis, ORE1, ORE3 and ORE9, play roles in crosstalk among multiple hormone-mediated senescence pathways.</title>
        <authorList>
            <person name="Kim J.H."/>
            <person name="Chung K.M."/>
            <person name="Woo H.R."/>
        </authorList>
    </citation>
    <scope>FUNCTION</scope>
</reference>
<reference key="18">
    <citation type="journal article" date="2011" name="Plant Cell Environ.">
        <title>EIN2 regulates salt stress response and interacts with a MA3 domain-containing protein ECIP1 in Arabidopsis.</title>
        <authorList>
            <person name="Lei G."/>
            <person name="Shen M."/>
            <person name="Li Z.G."/>
            <person name="Zhang B."/>
            <person name="Duan K.X."/>
            <person name="Wang N."/>
            <person name="Cao Y.R."/>
            <person name="Zhang W.K."/>
            <person name="Ma B."/>
            <person name="Ling H.Q."/>
            <person name="Chen S.Y."/>
            <person name="Zhang J.S."/>
        </authorList>
    </citation>
    <scope>FUNCTION</scope>
    <scope>DISRUPTION PHENOTYPE</scope>
    <scope>INTERACTION WITH MRF3/ECIP1</scope>
    <source>
        <strain>cv. Columbia</strain>
    </source>
</reference>
<reference key="19">
    <citation type="journal article" date="2012" name="Cell Res.">
        <title>Activation of ethylene signaling is mediated by nuclear translocation of the cleaved EIN2 carboxyl terminus.</title>
        <authorList>
            <person name="Wen X."/>
            <person name="Zhang C."/>
            <person name="Ji Y."/>
            <person name="Zhao Q."/>
            <person name="He W."/>
            <person name="An F."/>
            <person name="Jiang L."/>
            <person name="Guo H."/>
        </authorList>
    </citation>
    <scope>FUNCTION (EIN2-CEND)</scope>
    <scope>SUBCELLULAR LOCATION (EIN2-CEND)</scope>
    <scope>SUBCELLULAR LOCATION</scope>
    <scope>PROTEOLYTIC PROCESSING</scope>
</reference>
<reference key="20">
    <citation type="journal article" date="2012" name="Proc. Natl. Acad. Sci. U.S.A.">
        <title>CTR1 phosphorylates the central regulator EIN2 to control ethylene hormone signaling from the ER membrane to the nucleus in Arabidopsis.</title>
        <authorList>
            <person name="Ju C."/>
            <person name="Yoon G.M."/>
            <person name="Shemansky J.M."/>
            <person name="Lin D.Y."/>
            <person name="Ying Z.I."/>
            <person name="Chang J."/>
            <person name="Garrett W.M."/>
            <person name="Kessenbrock M."/>
            <person name="Groth G."/>
            <person name="Tucker M.L."/>
            <person name="Cooper B."/>
            <person name="Kieber J.J."/>
            <person name="Chang C."/>
        </authorList>
    </citation>
    <scope>INTERACTION WITH CTR1</scope>
    <scope>PHOSPHORYLATION AT SER-645; SER-659; SER-757; THR-819; SER-924 AND SER-1283</scope>
    <scope>MUTAGENESIS OF SER-645 AND SER-924</scope>
    <scope>SUBCELLULAR LOCATION</scope>
    <scope>SUBCELLULAR LOCATION (EIN2-CEND)</scope>
    <scope>PROTEOLYTIC PROCESSING</scope>
</reference>
<reference key="21">
    <citation type="journal article" date="2012" name="Science">
        <title>Processing and subcellular trafficking of ER-tethered EIN2 control response to ethylene gas.</title>
        <authorList>
            <person name="Qiao H."/>
            <person name="Shen Z."/>
            <person name="Huang S.S."/>
            <person name="Schmitz R.J."/>
            <person name="Urich M.A."/>
            <person name="Briggs S.P."/>
            <person name="Ecker J.R."/>
        </authorList>
    </citation>
    <scope>SUBCELLULAR LOCATION</scope>
    <scope>SUBCELLULAR LOCATION (EIN2-CEND)</scope>
    <scope>PROTEOLYTIC PROCESSING</scope>
    <scope>PHOSPHORYLATION AT SER-645; SER-659 AND SER-757</scope>
    <scope>MUTAGENESIS OF SER-645</scope>
</reference>
<reference key="22">
    <citation type="journal article" date="2013" name="Mol. Plant">
        <title>From endoplasmic reticulum (ER) to nucleus: EIN2 bridges the gap in ethylene signaling.</title>
        <authorList>
            <person name="Ji Y."/>
            <person name="Guo H."/>
        </authorList>
    </citation>
    <scope>REVIEW</scope>
</reference>
<reference key="23">
    <citation type="journal article" date="2015" name="Cell">
        <title>EIN2-directed translational regulation of ethylene signaling in Arabidopsis.</title>
        <authorList>
            <person name="Li W."/>
            <person name="Ma M."/>
            <person name="Feng Y."/>
            <person name="Li H."/>
            <person name="Wang Y."/>
            <person name="Ma Y."/>
            <person name="Li M."/>
            <person name="An F."/>
            <person name="Guo H."/>
        </authorList>
    </citation>
    <scope>FUNCTION (EIN2-CEND)</scope>
    <scope>MUTAGENESIS OF 1262-LEU--LEU-1269</scope>
    <scope>SUBCELLULAR LOCATION (EIN2-CEND)</scope>
    <scope>INTERACTION WITH XRN4/EIN5; PAB2; PAB4 AND PAB8 (EIN2-CEND)</scope>
</reference>
<reference key="24">
    <citation type="journal article" date="2015" name="Cell">
        <title>Gene-specific translation regulation mediated by the hormone-signaling molecule EIN2.</title>
        <authorList>
            <person name="Merchante C."/>
            <person name="Brumos J."/>
            <person name="Yun J."/>
            <person name="Hu Q."/>
            <person name="Spencer K.R."/>
            <person name="Enriquez P."/>
            <person name="Binder B.M."/>
            <person name="Heber S."/>
            <person name="Stepanova A.N."/>
            <person name="Alonso J.M."/>
        </authorList>
    </citation>
    <scope>FUNCTION (EIN2-CEND)</scope>
    <scope>SUBCELLULAR LOCATION (EIN2-CEND)</scope>
</reference>
<reference key="25">
    <citation type="journal article" date="2015" name="Mol. Plant">
        <title>Targeting plant ethylene responses by controlling essential protein-protein interactions in the ethylene pathway.</title>
        <authorList>
            <person name="Bisson M.M."/>
            <person name="Groth G."/>
        </authorList>
    </citation>
    <scope>INTERACTION WITH ETR1</scope>
    <scope>DOMAIN</scope>
    <scope>SUBCELLULAR LOCATION (EIN2-CEND)</scope>
    <scope>MUTAGENESIS OF 1262-LEU--LEU-1269</scope>
</reference>
<reference key="26">
    <citation type="journal article" date="2015" name="PLoS Genet.">
        <title>Unsaturation of very-long-chain ceramides protects plant from hypoxia-induced damages by modulating ethylene signaling in Arabidopsis.</title>
        <authorList>
            <person name="Xie L.-J."/>
            <person name="Chen Q.-F."/>
            <person name="Chen M.-X."/>
            <person name="Yu L.-J."/>
            <person name="Huang L."/>
            <person name="Chen L."/>
            <person name="Wang F.-Z."/>
            <person name="Xia F.-N."/>
            <person name="Zhu T.-R."/>
            <person name="Wu J.-X."/>
            <person name="Yin J."/>
            <person name="Liao B."/>
            <person name="Shi J."/>
            <person name="Zhang J.-H."/>
            <person name="Aharoni A."/>
            <person name="Yao N."/>
            <person name="Shu W."/>
            <person name="Xiao S."/>
        </authorList>
    </citation>
    <scope>SUBCELLULAR LOCATION</scope>
    <scope>INDUCTION BY HYPOXIA</scope>
    <source>
        <strain>cv. Columbia</strain>
    </source>
</reference>
<reference key="27">
    <citation type="journal article" date="2016" name="J. Exp. Bot.">
        <title>Mitogen-activated protein kinase 6 mediates nuclear translocation of ORE3 to promote ORE9 gene expression in methyl jasmonate-induced leaf senescence.</title>
        <authorList>
            <person name="Zhang Y."/>
            <person name="Liu J."/>
            <person name="Chai J."/>
            <person name="Xing D."/>
        </authorList>
    </citation>
    <scope>FUNCTION</scope>
    <scope>FUNCTION (EIN2-CEND)</scope>
    <scope>SUBCELLULAR LOCATION (EIN2-CEND)</scope>
    <scope>TISSUE SPECIFICITY</scope>
</reference>
<reference key="28">
    <citation type="journal article" date="2016" name="Nat. Commun.">
        <title>EIN2-dependent regulation of acetylation of histone H3K14 and non-canonical histone H3K23 in ethylene signalling.</title>
        <authorList>
            <person name="Zhang F."/>
            <person name="Qi B."/>
            <person name="Wang L."/>
            <person name="Zhao B."/>
            <person name="Rode S."/>
            <person name="Riggan N.D."/>
            <person name="Ecker J.R."/>
            <person name="Qiao H."/>
        </authorList>
    </citation>
    <scope>FUNCTION</scope>
    <scope>DISRUPTION PHENOTYPE</scope>
    <scope>INTERACTION WITH ENAP1</scope>
    <source>
        <strain>cv. Columbia</strain>
    </source>
</reference>
<reference key="29">
    <citation type="journal article" date="2017" name="Proc. Natl. Acad. Sci. U.S.A.">
        <title>EIN2 mediates direct regulation of histone acetylation in the ethylene response.</title>
        <authorList>
            <person name="Zhang F."/>
            <person name="Wang L."/>
            <person name="Qi B."/>
            <person name="Zhao B."/>
            <person name="Ko E.E."/>
            <person name="Riggan N.D."/>
            <person name="Chin K."/>
            <person name="Qiao H."/>
        </authorList>
    </citation>
    <scope>FUNCTION</scope>
    <scope>MUTAGENESIS OF SER-645</scope>
    <scope>DISRUPTION PHENOTYPE</scope>
    <scope>INTERACTION WITH ENAP1</scope>
    <source>
        <strain>cv. Columbia</strain>
    </source>
</reference>
<reference key="30">
    <citation type="journal article" date="2019" name="Elife">
        <title>Epigenetic silencing of a multifunctional plant stress regulator.</title>
        <authorList>
            <person name="Zander M."/>
            <person name="Willige B.C."/>
            <person name="He Y."/>
            <person name="Nguyen T.A."/>
            <person name="Langford A.E."/>
            <person name="Nehring R."/>
            <person name="Howell E."/>
            <person name="McGrath R."/>
            <person name="Bartlett A."/>
            <person name="Castanon R."/>
            <person name="Nery J.R."/>
            <person name="Chen H."/>
            <person name="Zhang Z."/>
            <person name="Jupe F."/>
            <person name="Stepanova A."/>
            <person name="Schmitz R.J."/>
            <person name="Lewsey M.G."/>
            <person name="Chory J."/>
            <person name="Ecker J.R."/>
        </authorList>
    </citation>
    <scope>REGULATION BY EEN AND EIN6</scope>
    <source>
        <strain>cv. Columbia</strain>
        <strain>cv. Landsberg erecta</strain>
    </source>
</reference>
<name>EIN2_ARATH</name>
<comment type="function">
    <text evidence="3 4 5 6 7 9 12 13 22 23 25 26 27">Central factor in signaling pathways regulated by ethylene (ET) and involved in various processes including development, plant defense, senescence, nucleotide sugar flux, and tropisms (PubMed:27694846, PubMed:28874528). Necessary for ethylene-mediated gene regulation, and for the induction of some genes by ozone. Acts downstream of ET receptors, and upstream of ethylene regulated transcription factors. Required for cytokinin-mediated processes. Seems to be implicated in cross-talk between ET, jasmonate and other pathways. Probably not involved in iron uptake (PubMed:10381874, PubMed:12953109, PubMed:14973160, PubMed:15010611, PubMed:15272873, PubMed:7770519, PubMed:9351240). Has a short half-life and undergoes rapid proteasome-mediated turnover in the absence of ethylene (PubMed:19196655). Required for ethylene-induced EIN3 stabilization via proteasomal degradation of EBF1/EBF2 proteins (PubMed:20647342). Regulates the leaf senescence induced by methyl jasmonate, ethylene and abscisic acid (PubMed:15010611, Ref.17). Required during salt stress to confer resistance (PubMed:21631530).</text>
</comment>
<comment type="function">
    <molecule>EIN2-CEND</molecule>
    <text evidence="15 19 20 21 22 23">Trafficking signal inducing ethylene response. The nuclear localization is both necessary and sufficient to activate EIN3-mediated transcription and ethylene responses (PubMed:23070300). Involved in ethylene (ET)-mediated signaling pathways by triggering histone acetylation of H3K14 and H3K23 in an ENAP1-dependent manner, thus influencing the expression of ethylene-responsive genes (PubMed:27694846, PubMed:28874528). Necessary and sufficient for 3'-UTR-mediated translational repression of EBF1 and EBF2 mRNAs. Ethylene induces EIN2-CEND to associate with 3' UTRs in cytoplasmic foci and target EBF1/2 mRNAs to cytoplasmic processing-body (P-body) (PubMed:26496607, PubMed:26496608). MPK6 regulates the cleavage and nuclear translocation of EIN2-CEND under methyl jasmonate treatment (PubMed:26507893). Required for EIN3 accumulation (PubMed:26507893).</text>
</comment>
<comment type="subunit">
    <text evidence="8 9 10 11 13 16 18">Interacts (via NLS) with ETR1 (PubMed:19769567, PubMed:25843012). Interacts (via C-terminus) with EER5 and the COP9 signalosome subunits CSN3, CSN6A and CSN6B (PubMed:18429939). Interacts with ETP1 and ETP2 (PubMed:19196655). Interacts with CTR1 (PubMed:23132950). Interacts with all members of the ethylene receptor family, including ETR1, ETR2, ERS1, ERS2 and EIN4 (PubMed:20591837). Binds to MRF3/ECIP1 (PubMed:21631530).</text>
</comment>
<comment type="subunit">
    <molecule>EIN2-CEND</molecule>
    <text evidence="19 22 23">Interacts with several P-body components, such as XRN4/EIN5, PAB2, PAB4 and PAB8 (PubMed:26496607). Binds to ENAP1 in the presence of ethylene; this reaction facilitates its association with histone (PubMed:27694846, PubMed:28874528).</text>
</comment>
<comment type="interaction">
    <interactant intactId="EBI-2437287">
        <id>Q9S814</id>
    </interactant>
    <interactant intactId="EBI-1238820">
        <id>Q9LJ68</id>
        <label>ETP1</label>
    </interactant>
    <organismsDiffer>false</organismsDiffer>
    <experiments>4</experiments>
</comment>
<comment type="interaction">
    <interactant intactId="EBI-2437287">
        <id>Q9S814</id>
    </interactant>
    <interactant intactId="EBI-2437385">
        <id>Q9LJ74</id>
        <label>ETP2</label>
    </interactant>
    <organismsDiffer>false</organismsDiffer>
    <experiments>2</experiments>
</comment>
<comment type="interaction">
    <interactant intactId="EBI-2437287">
        <id>Q9S814</id>
    </interactant>
    <interactant intactId="EBI-1606682">
        <id>P49333</id>
        <label>ETR1</label>
    </interactant>
    <organismsDiffer>false</organismsDiffer>
    <experiments>2</experiments>
</comment>
<comment type="subcellular location">
    <molecule>Ethylene-insensitive protein 2</molecule>
    <subcellularLocation>
        <location evidence="10 14 15 16">Endoplasmic reticulum membrane</location>
        <topology evidence="1">Multi-pass membrane protein</topology>
    </subcellularLocation>
</comment>
<comment type="subcellular location">
    <molecule>EIN2-CEND</molecule>
    <subcellularLocation>
        <location evidence="14 15 16 17 19 20 21">Nucleus</location>
    </subcellularLocation>
    <subcellularLocation>
        <location evidence="15 18 19 20">Cytoplasm</location>
    </subcellularLocation>
    <subcellularLocation>
        <location evidence="17 18">Endoplasmic reticulum membrane</location>
    </subcellularLocation>
    <text evidence="14 15 16 17 18 19 20 21">Perception of ethylene or methyl jasmonate leads to proteolytic cleavage allowing the C-terminal domain to localize to the nucleus while the N-terminus remains at the endoplasmic reticulum membrane. Apart from nuclear localization, some association with endoplasmic membranes and some speckles are also observed in the cytoplasm. During hypoxia (e.g. submergences), translocates from endoplasmic reticulum (ER) to the nucleus via a ceramides-triggered and CTR1-dependent manner (PubMed:25822663).</text>
</comment>
<comment type="tissue specificity">
    <molecule>EIN2-CEND</molecule>
    <text evidence="21">Localized to the guard cells after methyl jasmonate treatment.</text>
</comment>
<comment type="induction">
    <text evidence="17 24">Accumulates upon hypoxia (e.g. submergences) (PubMed:25822663). Expression level is enhanced by a chromatin-dependent epigenetic regulatory mechanism involving both EEN and REF6/EIN6 (PubMed:31418686).</text>
</comment>
<comment type="domain">
    <text evidence="3 9 18">The N-terminal (1-560) region seems to be regulated by upstream components of the ET signal transduction pathway, and may in turn regulate the C-terminal region. The C-terminal (454-1294) region regulates downstream events of ET and jasmonate signaling pathways, and can confer constitutive responses to ET. The C-terminal (1047-1294) region is necessary and sufficient for interactions with ETP1 and ETP2 (PubMed:19196655). The nuclear localization signal (1262-1269) is required for interaction with ETR1 (PubMed:25843012).</text>
</comment>
<comment type="PTM">
    <text evidence="16">Phosphorylated by CTR1 on at least 4 sites. Phosphorylation of Ser-645 and Ser-924 is involved in repressing EIN2 signaling. Loss of phosphorylation results in nuclear localization of the C-terminus of EIN2.</text>
</comment>
<comment type="disruption phenotype">
    <text evidence="3 13 22 23">Complete ethylene insensitivity (PubMed:10381874). Extreme salt sensitivity during seed germination and plant growth leading to epinastic backward growth of leaf blade and petiole, and small rosette size (PubMed:21631530). Reduced ethylene-induced histone acetylation of H3K14 and H3K23 associated with a lower induction of ethylene-responsive genes (PubMed:27694846, PubMed:28874528).</text>
</comment>
<comment type="miscellaneous">
    <text evidence="33">'Oresara' means 'long living' in Korean.</text>
</comment>
<comment type="similarity">
    <text evidence="32">Belongs to the NRAMP (TC 2.A.55) family.</text>
</comment>
<keyword id="KW-0927">Auxin signaling pathway</keyword>
<keyword id="KW-0156">Chromatin regulator</keyword>
<keyword id="KW-0932">Cytokinin signaling pathway</keyword>
<keyword id="KW-0963">Cytoplasm</keyword>
<keyword id="KW-0256">Endoplasmic reticulum</keyword>
<keyword id="KW-0936">Ethylene signaling pathway</keyword>
<keyword id="KW-0472">Membrane</keyword>
<keyword id="KW-0539">Nucleus</keyword>
<keyword id="KW-0597">Phosphoprotein</keyword>
<keyword id="KW-0611">Plant defense</keyword>
<keyword id="KW-1185">Reference proteome</keyword>
<keyword id="KW-0346">Stress response</keyword>
<keyword id="KW-0812">Transmembrane</keyword>
<keyword id="KW-1133">Transmembrane helix</keyword>
<protein>
    <recommendedName>
        <fullName evidence="28">Ethylene-insensitive protein 2</fullName>
        <shortName evidence="28">AtEIN2</shortName>
        <shortName evidence="28">EIN-2</shortName>
    </recommendedName>
    <alternativeName>
        <fullName>Cytokinin-resistant protein AtCKR1</fullName>
    </alternativeName>
    <alternativeName>
        <fullName evidence="31">Protein ORESARA 3</fullName>
    </alternativeName>
    <component>
        <recommendedName>
            <fullName evidence="29">EIN2-CEND</fullName>
        </recommendedName>
        <alternativeName>
            <fullName evidence="30">EIN2C</fullName>
        </alternativeName>
    </component>
</protein>
<dbReference type="EMBL" id="AF141202">
    <property type="protein sequence ID" value="AAD41076.1"/>
    <property type="molecule type" value="Genomic_DNA"/>
</dbReference>
<dbReference type="EMBL" id="AF141203">
    <property type="protein sequence ID" value="AAD41077.1"/>
    <property type="molecule type" value="mRNA"/>
</dbReference>
<dbReference type="EMBL" id="AB005240">
    <property type="protein sequence ID" value="BAB08388.1"/>
    <property type="molecule type" value="Genomic_DNA"/>
</dbReference>
<dbReference type="EMBL" id="AL162751">
    <property type="protein sequence ID" value="CAB83284.1"/>
    <property type="molecule type" value="Genomic_DNA"/>
</dbReference>
<dbReference type="EMBL" id="CP002688">
    <property type="protein sequence ID" value="AED90580.1"/>
    <property type="molecule type" value="Genomic_DNA"/>
</dbReference>
<dbReference type="PIR" id="T48349">
    <property type="entry name" value="T48349"/>
</dbReference>
<dbReference type="RefSeq" id="NP_195948.1">
    <property type="nucleotide sequence ID" value="NM_120406.5"/>
</dbReference>
<dbReference type="SMR" id="Q9S814"/>
<dbReference type="BioGRID" id="17165">
    <property type="interactions" value="13"/>
</dbReference>
<dbReference type="FunCoup" id="Q9S814">
    <property type="interactions" value="1974"/>
</dbReference>
<dbReference type="IntAct" id="Q9S814">
    <property type="interactions" value="3"/>
</dbReference>
<dbReference type="STRING" id="3702.Q9S814"/>
<dbReference type="TCDB" id="2.A.55.2.8">
    <property type="family name" value="the metal ion (mn(2+)-iron) transporter (nramp) family"/>
</dbReference>
<dbReference type="GlyGen" id="Q9S814">
    <property type="glycosylation" value="2 sites, 1 O-linked glycan (2 sites)"/>
</dbReference>
<dbReference type="iPTMnet" id="Q9S814"/>
<dbReference type="PaxDb" id="3702-AT5G03280.1"/>
<dbReference type="ProteomicsDB" id="220445"/>
<dbReference type="EnsemblPlants" id="AT5G03280.1">
    <property type="protein sequence ID" value="AT5G03280.1"/>
    <property type="gene ID" value="AT5G03280"/>
</dbReference>
<dbReference type="GeneID" id="831889"/>
<dbReference type="Gramene" id="AT5G03280.1">
    <property type="protein sequence ID" value="AT5G03280.1"/>
    <property type="gene ID" value="AT5G03280"/>
</dbReference>
<dbReference type="KEGG" id="ath:AT5G03280"/>
<dbReference type="Araport" id="AT5G03280"/>
<dbReference type="TAIR" id="AT5G03280">
    <property type="gene designation" value="EIN2"/>
</dbReference>
<dbReference type="eggNOG" id="KOG1291">
    <property type="taxonomic scope" value="Eukaryota"/>
</dbReference>
<dbReference type="HOGENOM" id="CLU_006509_0_0_1"/>
<dbReference type="InParanoid" id="Q9S814"/>
<dbReference type="OMA" id="ADIQYMR"/>
<dbReference type="PhylomeDB" id="Q9S814"/>
<dbReference type="CD-CODE" id="60F64496">
    <property type="entry name" value="P-body"/>
</dbReference>
<dbReference type="PRO" id="PR:Q9S814"/>
<dbReference type="Proteomes" id="UP000006548">
    <property type="component" value="Chromosome 5"/>
</dbReference>
<dbReference type="ExpressionAtlas" id="Q9S814">
    <property type="expression patterns" value="baseline and differential"/>
</dbReference>
<dbReference type="GO" id="GO:0005789">
    <property type="term" value="C:endoplasmic reticulum membrane"/>
    <property type="evidence" value="ECO:0007669"/>
    <property type="project" value="UniProtKB-SubCell"/>
</dbReference>
<dbReference type="GO" id="GO:0005634">
    <property type="term" value="C:nucleus"/>
    <property type="evidence" value="ECO:0007669"/>
    <property type="project" value="UniProtKB-SubCell"/>
</dbReference>
<dbReference type="GO" id="GO:0003682">
    <property type="term" value="F:chromatin binding"/>
    <property type="evidence" value="ECO:0000314"/>
    <property type="project" value="UniProtKB"/>
</dbReference>
<dbReference type="GO" id="GO:0042393">
    <property type="term" value="F:histone binding"/>
    <property type="evidence" value="ECO:0000314"/>
    <property type="project" value="UniProtKB"/>
</dbReference>
<dbReference type="GO" id="GO:0046873">
    <property type="term" value="F:metal ion transmembrane transporter activity"/>
    <property type="evidence" value="ECO:0007669"/>
    <property type="project" value="InterPro"/>
</dbReference>
<dbReference type="GO" id="GO:0003729">
    <property type="term" value="F:mRNA binding"/>
    <property type="evidence" value="ECO:0000314"/>
    <property type="project" value="TAIR"/>
</dbReference>
<dbReference type="GO" id="GO:0009926">
    <property type="term" value="P:auxin polar transport"/>
    <property type="evidence" value="ECO:0000315"/>
    <property type="project" value="TAIR"/>
</dbReference>
<dbReference type="GO" id="GO:0009734">
    <property type="term" value="P:auxin-activated signaling pathway"/>
    <property type="evidence" value="ECO:0007669"/>
    <property type="project" value="UniProtKB-KW"/>
</dbReference>
<dbReference type="GO" id="GO:0051301">
    <property type="term" value="P:cell division"/>
    <property type="evidence" value="ECO:0000315"/>
    <property type="project" value="TAIR"/>
</dbReference>
<dbReference type="GO" id="GO:0009736">
    <property type="term" value="P:cytokinin-activated signaling pathway"/>
    <property type="evidence" value="ECO:0007669"/>
    <property type="project" value="UniProtKB-KW"/>
</dbReference>
<dbReference type="GO" id="GO:0052544">
    <property type="term" value="P:defense response by callose deposition in cell wall"/>
    <property type="evidence" value="ECO:0000315"/>
    <property type="project" value="TAIR"/>
</dbReference>
<dbReference type="GO" id="GO:0042742">
    <property type="term" value="P:defense response to bacterium"/>
    <property type="evidence" value="ECO:0000315"/>
    <property type="project" value="TAIR"/>
</dbReference>
<dbReference type="GO" id="GO:0050832">
    <property type="term" value="P:defense response to fungus"/>
    <property type="evidence" value="ECO:0000315"/>
    <property type="project" value="TAIR"/>
</dbReference>
<dbReference type="GO" id="GO:0040029">
    <property type="term" value="P:epigenetic regulation of gene expression"/>
    <property type="evidence" value="ECO:0000315"/>
    <property type="project" value="UniProtKB"/>
</dbReference>
<dbReference type="GO" id="GO:0001736">
    <property type="term" value="P:establishment of planar polarity"/>
    <property type="evidence" value="ECO:0000316"/>
    <property type="project" value="TAIR"/>
</dbReference>
<dbReference type="GO" id="GO:0009873">
    <property type="term" value="P:ethylene-activated signaling pathway"/>
    <property type="evidence" value="ECO:0000315"/>
    <property type="project" value="UniProtKB"/>
</dbReference>
<dbReference type="GO" id="GO:0106167">
    <property type="term" value="P:extracellular ATP signaling"/>
    <property type="evidence" value="ECO:0000315"/>
    <property type="project" value="TAIR"/>
</dbReference>
<dbReference type="GO" id="GO:0009871">
    <property type="term" value="P:jasmonic acid and ethylene-dependent systemic resistance, ethylene mediated signaling pathway"/>
    <property type="evidence" value="ECO:0000304"/>
    <property type="project" value="TAIR"/>
</dbReference>
<dbReference type="GO" id="GO:0010150">
    <property type="term" value="P:leaf senescence"/>
    <property type="evidence" value="ECO:0000315"/>
    <property type="project" value="TAIR"/>
</dbReference>
<dbReference type="GO" id="GO:0031348">
    <property type="term" value="P:negative regulation of defense response"/>
    <property type="evidence" value="ECO:0000315"/>
    <property type="project" value="TAIR"/>
</dbReference>
<dbReference type="GO" id="GO:0010087">
    <property type="term" value="P:phloem or xylem histogenesis"/>
    <property type="evidence" value="ECO:0000315"/>
    <property type="project" value="TAIR"/>
</dbReference>
<dbReference type="GO" id="GO:0009789">
    <property type="term" value="P:positive regulation of abscisic acid-activated signaling pathway"/>
    <property type="evidence" value="ECO:0000315"/>
    <property type="project" value="TAIR"/>
</dbReference>
<dbReference type="GO" id="GO:0010119">
    <property type="term" value="P:regulation of stomatal movement"/>
    <property type="evidence" value="ECO:0000315"/>
    <property type="project" value="TAIR"/>
</dbReference>
<dbReference type="GO" id="GO:0009408">
    <property type="term" value="P:response to heat"/>
    <property type="evidence" value="ECO:0000315"/>
    <property type="project" value="TAIR"/>
</dbReference>
<dbReference type="GO" id="GO:0002237">
    <property type="term" value="P:response to molecule of bacterial origin"/>
    <property type="evidence" value="ECO:0000315"/>
    <property type="project" value="TAIR"/>
</dbReference>
<dbReference type="GO" id="GO:0006970">
    <property type="term" value="P:response to osmotic stress"/>
    <property type="evidence" value="ECO:0000315"/>
    <property type="project" value="TAIR"/>
</dbReference>
<dbReference type="GO" id="GO:0009651">
    <property type="term" value="P:response to salt stress"/>
    <property type="evidence" value="ECO:0000315"/>
    <property type="project" value="TAIR"/>
</dbReference>
<dbReference type="GO" id="GO:0048765">
    <property type="term" value="P:root hair cell differentiation"/>
    <property type="evidence" value="ECO:0000316"/>
    <property type="project" value="TAIR"/>
</dbReference>
<dbReference type="GO" id="GO:0010182">
    <property type="term" value="P:sugar mediated signaling pathway"/>
    <property type="evidence" value="ECO:0000304"/>
    <property type="project" value="TAIR"/>
</dbReference>
<dbReference type="InterPro" id="IPR017187">
    <property type="entry name" value="EIN2"/>
</dbReference>
<dbReference type="InterPro" id="IPR001046">
    <property type="entry name" value="NRAMP_fam"/>
</dbReference>
<dbReference type="NCBIfam" id="NF037982">
    <property type="entry name" value="Nramp_1"/>
    <property type="match status" value="1"/>
</dbReference>
<dbReference type="PANTHER" id="PTHR11706:SF75">
    <property type="entry name" value="ETHYLENE-INSENSITIVE PROTEIN 2"/>
    <property type="match status" value="1"/>
</dbReference>
<dbReference type="PANTHER" id="PTHR11706">
    <property type="entry name" value="SOLUTE CARRIER PROTEIN FAMILY 11 MEMBER"/>
    <property type="match status" value="1"/>
</dbReference>
<dbReference type="Pfam" id="PF01566">
    <property type="entry name" value="Nramp"/>
    <property type="match status" value="1"/>
</dbReference>
<dbReference type="PIRSF" id="PIRSF037378">
    <property type="entry name" value="EIN2"/>
    <property type="match status" value="1"/>
</dbReference>
<dbReference type="PRINTS" id="PR00447">
    <property type="entry name" value="NATRESASSCMP"/>
</dbReference>
<proteinExistence type="evidence at protein level"/>
<gene>
    <name evidence="28" type="primary">EIN2</name>
    <name type="synonym">CKR1</name>
    <name evidence="31" type="synonym">ORE3</name>
    <name evidence="34" type="ordered locus">At5g03280</name>
    <name evidence="36" type="ORF">F12E4.10</name>
    <name evidence="35" type="ORF">MOK16.19</name>
</gene>